<organism>
    <name type="scientific">Halalkalibacterium halodurans (strain ATCC BAA-125 / DSM 18197 / FERM 7344 / JCM 9153 / C-125)</name>
    <name type="common">Bacillus halodurans</name>
    <dbReference type="NCBI Taxonomy" id="272558"/>
    <lineage>
        <taxon>Bacteria</taxon>
        <taxon>Bacillati</taxon>
        <taxon>Bacillota</taxon>
        <taxon>Bacilli</taxon>
        <taxon>Bacillales</taxon>
        <taxon>Bacillaceae</taxon>
        <taxon>Halalkalibacterium (ex Joshi et al. 2022)</taxon>
    </lineage>
</organism>
<evidence type="ECO:0000255" key="1">
    <source>
        <dbReference type="HAMAP-Rule" id="MF_00666"/>
    </source>
</evidence>
<evidence type="ECO:0000256" key="2">
    <source>
        <dbReference type="SAM" id="MobiDB-lite"/>
    </source>
</evidence>
<gene>
    <name evidence="1" type="primary">sspP</name>
    <name type="ordered locus">BH2301</name>
</gene>
<dbReference type="EMBL" id="BA000004">
    <property type="protein sequence ID" value="BAB06020.1"/>
    <property type="molecule type" value="Genomic_DNA"/>
</dbReference>
<dbReference type="PIR" id="E83937">
    <property type="entry name" value="E83937"/>
</dbReference>
<dbReference type="RefSeq" id="WP_010898457.1">
    <property type="nucleotide sequence ID" value="NC_002570.2"/>
</dbReference>
<dbReference type="STRING" id="272558.gene:10728199"/>
<dbReference type="GeneID" id="87597840"/>
<dbReference type="KEGG" id="bha:BH2301"/>
<dbReference type="HOGENOM" id="CLU_210130_1_0_9"/>
<dbReference type="OrthoDB" id="2691914at2"/>
<dbReference type="Proteomes" id="UP000001258">
    <property type="component" value="Chromosome"/>
</dbReference>
<dbReference type="GO" id="GO:0030436">
    <property type="term" value="P:asexual sporulation"/>
    <property type="evidence" value="ECO:0007669"/>
    <property type="project" value="UniProtKB-UniRule"/>
</dbReference>
<dbReference type="GO" id="GO:0030435">
    <property type="term" value="P:sporulation resulting in formation of a cellular spore"/>
    <property type="evidence" value="ECO:0007669"/>
    <property type="project" value="UniProtKB-KW"/>
</dbReference>
<dbReference type="HAMAP" id="MF_00666">
    <property type="entry name" value="SspP"/>
    <property type="match status" value="1"/>
</dbReference>
<dbReference type="InterPro" id="IPR012614">
    <property type="entry name" value="SASP_SspP"/>
</dbReference>
<dbReference type="NCBIfam" id="NF006905">
    <property type="entry name" value="PRK09399.1"/>
    <property type="match status" value="1"/>
</dbReference>
<dbReference type="Pfam" id="PF08179">
    <property type="entry name" value="SspP"/>
    <property type="match status" value="1"/>
</dbReference>
<feature type="chain" id="PRO_0000217212" description="Small, acid-soluble spore protein P">
    <location>
        <begin position="1"/>
        <end position="45"/>
    </location>
</feature>
<feature type="region of interest" description="Disordered" evidence="2">
    <location>
        <begin position="1"/>
        <end position="45"/>
    </location>
</feature>
<feature type="compositionally biased region" description="Basic and acidic residues" evidence="2">
    <location>
        <begin position="1"/>
        <end position="12"/>
    </location>
</feature>
<protein>
    <recommendedName>
        <fullName evidence="1">Small, acid-soluble spore protein P</fullName>
        <shortName evidence="1">SASP P</shortName>
    </recommendedName>
</protein>
<accession>Q9KAI6</accession>
<comment type="subcellular location">
    <subcellularLocation>
        <location evidence="1">Spore core</location>
    </subcellularLocation>
</comment>
<comment type="induction">
    <text evidence="1">Expressed only in the forespore compartment of sporulating cells.</text>
</comment>
<comment type="similarity">
    <text evidence="1">Belongs to the SspP family.</text>
</comment>
<reference key="1">
    <citation type="journal article" date="2000" name="Nucleic Acids Res.">
        <title>Complete genome sequence of the alkaliphilic bacterium Bacillus halodurans and genomic sequence comparison with Bacillus subtilis.</title>
        <authorList>
            <person name="Takami H."/>
            <person name="Nakasone K."/>
            <person name="Takaki Y."/>
            <person name="Maeno G."/>
            <person name="Sasaki R."/>
            <person name="Masui N."/>
            <person name="Fuji F."/>
            <person name="Hirama C."/>
            <person name="Nakamura Y."/>
            <person name="Ogasawara N."/>
            <person name="Kuhara S."/>
            <person name="Horikoshi K."/>
        </authorList>
    </citation>
    <scope>NUCLEOTIDE SEQUENCE [LARGE SCALE GENOMIC DNA]</scope>
    <source>
        <strain>ATCC BAA-125 / DSM 18197 / FERM 7344 / JCM 9153 / C-125</strain>
    </source>
</reference>
<proteinExistence type="inferred from homology"/>
<sequence>MTERHTAKDIRKNAPKGENPGQPEPLSGSKKVKKRNHVSQTNGEG</sequence>
<keyword id="KW-1185">Reference proteome</keyword>
<keyword id="KW-0749">Sporulation</keyword>
<name>SSPP_HALH5</name>